<reference key="1">
    <citation type="journal article" date="2005" name="Proc. Natl. Acad. Sci. U.S.A.">
        <title>The psychrophilic lifestyle as revealed by the genome sequence of Colwellia psychrerythraea 34H through genomic and proteomic analyses.</title>
        <authorList>
            <person name="Methe B.A."/>
            <person name="Nelson K.E."/>
            <person name="Deming J.W."/>
            <person name="Momen B."/>
            <person name="Melamud E."/>
            <person name="Zhang X."/>
            <person name="Moult J."/>
            <person name="Madupu R."/>
            <person name="Nelson W.C."/>
            <person name="Dodson R.J."/>
            <person name="Brinkac L.M."/>
            <person name="Daugherty S.C."/>
            <person name="Durkin A.S."/>
            <person name="DeBoy R.T."/>
            <person name="Kolonay J.F."/>
            <person name="Sullivan S.A."/>
            <person name="Zhou L."/>
            <person name="Davidsen T.M."/>
            <person name="Wu M."/>
            <person name="Huston A.L."/>
            <person name="Lewis M."/>
            <person name="Weaver B."/>
            <person name="Weidman J.F."/>
            <person name="Khouri H."/>
            <person name="Utterback T.R."/>
            <person name="Feldblyum T.V."/>
            <person name="Fraser C.M."/>
        </authorList>
    </citation>
    <scope>NUCLEOTIDE SEQUENCE [LARGE SCALE GENOMIC DNA]</scope>
    <source>
        <strain>34H / ATCC BAA-681</strain>
    </source>
</reference>
<keyword id="KW-0004">4Fe-4S</keyword>
<keyword id="KW-0028">Amino-acid biosynthesis</keyword>
<keyword id="KW-0100">Branched-chain amino acid biosynthesis</keyword>
<keyword id="KW-0408">Iron</keyword>
<keyword id="KW-0411">Iron-sulfur</keyword>
<keyword id="KW-0432">Leucine biosynthesis</keyword>
<keyword id="KW-0456">Lyase</keyword>
<keyword id="KW-0479">Metal-binding</keyword>
<feature type="chain" id="PRO_0000076738" description="3-isopropylmalate dehydratase large subunit">
    <location>
        <begin position="1"/>
        <end position="471"/>
    </location>
</feature>
<feature type="binding site" evidence="1">
    <location>
        <position position="351"/>
    </location>
    <ligand>
        <name>[4Fe-4S] cluster</name>
        <dbReference type="ChEBI" id="CHEBI:49883"/>
    </ligand>
</feature>
<feature type="binding site" evidence="1">
    <location>
        <position position="414"/>
    </location>
    <ligand>
        <name>[4Fe-4S] cluster</name>
        <dbReference type="ChEBI" id="CHEBI:49883"/>
    </ligand>
</feature>
<feature type="binding site" evidence="1">
    <location>
        <position position="417"/>
    </location>
    <ligand>
        <name>[4Fe-4S] cluster</name>
        <dbReference type="ChEBI" id="CHEBI:49883"/>
    </ligand>
</feature>
<accession>Q47WG2</accession>
<dbReference type="EC" id="4.2.1.33" evidence="1"/>
<dbReference type="EMBL" id="CP000083">
    <property type="protein sequence ID" value="AAZ27808.1"/>
    <property type="molecule type" value="Genomic_DNA"/>
</dbReference>
<dbReference type="RefSeq" id="WP_011044941.1">
    <property type="nucleotide sequence ID" value="NC_003910.7"/>
</dbReference>
<dbReference type="SMR" id="Q47WG2"/>
<dbReference type="STRING" id="167879.CPS_4210"/>
<dbReference type="KEGG" id="cps:CPS_4210"/>
<dbReference type="eggNOG" id="COG0065">
    <property type="taxonomic scope" value="Bacteria"/>
</dbReference>
<dbReference type="HOGENOM" id="CLU_006714_3_4_6"/>
<dbReference type="UniPathway" id="UPA00048">
    <property type="reaction ID" value="UER00071"/>
</dbReference>
<dbReference type="Proteomes" id="UP000000547">
    <property type="component" value="Chromosome"/>
</dbReference>
<dbReference type="GO" id="GO:0003861">
    <property type="term" value="F:3-isopropylmalate dehydratase activity"/>
    <property type="evidence" value="ECO:0007669"/>
    <property type="project" value="UniProtKB-UniRule"/>
</dbReference>
<dbReference type="GO" id="GO:0051539">
    <property type="term" value="F:4 iron, 4 sulfur cluster binding"/>
    <property type="evidence" value="ECO:0007669"/>
    <property type="project" value="UniProtKB-KW"/>
</dbReference>
<dbReference type="GO" id="GO:0046872">
    <property type="term" value="F:metal ion binding"/>
    <property type="evidence" value="ECO:0007669"/>
    <property type="project" value="UniProtKB-KW"/>
</dbReference>
<dbReference type="GO" id="GO:0009098">
    <property type="term" value="P:L-leucine biosynthetic process"/>
    <property type="evidence" value="ECO:0007669"/>
    <property type="project" value="UniProtKB-UniRule"/>
</dbReference>
<dbReference type="CDD" id="cd01583">
    <property type="entry name" value="IPMI"/>
    <property type="match status" value="1"/>
</dbReference>
<dbReference type="FunFam" id="3.30.499.10:FF:000007">
    <property type="entry name" value="3-isopropylmalate dehydratase large subunit"/>
    <property type="match status" value="1"/>
</dbReference>
<dbReference type="Gene3D" id="3.30.499.10">
    <property type="entry name" value="Aconitase, domain 3"/>
    <property type="match status" value="2"/>
</dbReference>
<dbReference type="HAMAP" id="MF_01026">
    <property type="entry name" value="LeuC_type1"/>
    <property type="match status" value="1"/>
</dbReference>
<dbReference type="InterPro" id="IPR004430">
    <property type="entry name" value="3-IsopropMal_deHydase_lsu"/>
</dbReference>
<dbReference type="InterPro" id="IPR015931">
    <property type="entry name" value="Acnase/IPM_dHydase_lsu_aba_1/3"/>
</dbReference>
<dbReference type="InterPro" id="IPR001030">
    <property type="entry name" value="Acoase/IPM_deHydtase_lsu_aba"/>
</dbReference>
<dbReference type="InterPro" id="IPR018136">
    <property type="entry name" value="Aconitase_4Fe-4S_BS"/>
</dbReference>
<dbReference type="InterPro" id="IPR036008">
    <property type="entry name" value="Aconitase_4Fe-4S_dom"/>
</dbReference>
<dbReference type="InterPro" id="IPR050067">
    <property type="entry name" value="IPM_dehydratase_rel_enz"/>
</dbReference>
<dbReference type="InterPro" id="IPR033941">
    <property type="entry name" value="IPMI_cat"/>
</dbReference>
<dbReference type="NCBIfam" id="TIGR00170">
    <property type="entry name" value="leuC"/>
    <property type="match status" value="1"/>
</dbReference>
<dbReference type="NCBIfam" id="NF004016">
    <property type="entry name" value="PRK05478.1"/>
    <property type="match status" value="1"/>
</dbReference>
<dbReference type="NCBIfam" id="NF009116">
    <property type="entry name" value="PRK12466.1"/>
    <property type="match status" value="1"/>
</dbReference>
<dbReference type="PANTHER" id="PTHR43822:SF9">
    <property type="entry name" value="3-ISOPROPYLMALATE DEHYDRATASE"/>
    <property type="match status" value="1"/>
</dbReference>
<dbReference type="PANTHER" id="PTHR43822">
    <property type="entry name" value="HOMOACONITASE, MITOCHONDRIAL-RELATED"/>
    <property type="match status" value="1"/>
</dbReference>
<dbReference type="Pfam" id="PF00330">
    <property type="entry name" value="Aconitase"/>
    <property type="match status" value="1"/>
</dbReference>
<dbReference type="PRINTS" id="PR00415">
    <property type="entry name" value="ACONITASE"/>
</dbReference>
<dbReference type="SUPFAM" id="SSF53732">
    <property type="entry name" value="Aconitase iron-sulfur domain"/>
    <property type="match status" value="1"/>
</dbReference>
<dbReference type="PROSITE" id="PS00450">
    <property type="entry name" value="ACONITASE_1"/>
    <property type="match status" value="1"/>
</dbReference>
<dbReference type="PROSITE" id="PS01244">
    <property type="entry name" value="ACONITASE_2"/>
    <property type="match status" value="1"/>
</dbReference>
<gene>
    <name evidence="1" type="primary">leuC</name>
    <name type="ordered locus">CPS_4210</name>
</gene>
<sequence>MTTSTPQTMYEKLWQTHLVEATKGETPLLYVDRHLIHEVTSPQAFANLRFHNRPVRHPERTIATMDHNISTRSIKIDAAGEGAANQLRALAINCKDFGIELFDMGHKNQGIAHVIGPELGLTLPGTIIVCGDSHTATHGAFGALAFGIGTSEVEHVFATQTLRQNKAKTMKIEVKGHVGAGISAKDIILAIIGKTGSAGATGYVVEYCGEAIEALSMEERMTVCNMSIEFGAKAGLIAPDQTTFDYVEGKEYAPKGEVFEQAVVDWKNLKSDADAQFDAVLTLDAKDIKAQVTWGTNPGQVISVDGTVPSPEDFSDPVEKESCVSALNYMGLTAGTKMTDIHVNKVFIGSCTNSRIEDLRAAAGVVQKYEGQQVVKTIDAIIVPGSYRVKEQAESEGLDKIFTDAGFEWRLPGCSMCLGMNDDVLEEGDRCASTSNRNFEGRQGRGSRTHLVSPEMAAAAAITGHFVDLNA</sequence>
<evidence type="ECO:0000255" key="1">
    <source>
        <dbReference type="HAMAP-Rule" id="MF_01026"/>
    </source>
</evidence>
<organism>
    <name type="scientific">Colwellia psychrerythraea (strain 34H / ATCC BAA-681)</name>
    <name type="common">Vibrio psychroerythus</name>
    <dbReference type="NCBI Taxonomy" id="167879"/>
    <lineage>
        <taxon>Bacteria</taxon>
        <taxon>Pseudomonadati</taxon>
        <taxon>Pseudomonadota</taxon>
        <taxon>Gammaproteobacteria</taxon>
        <taxon>Alteromonadales</taxon>
        <taxon>Colwelliaceae</taxon>
        <taxon>Colwellia</taxon>
    </lineage>
</organism>
<proteinExistence type="inferred from homology"/>
<name>LEUC_COLP3</name>
<comment type="function">
    <text evidence="1">Catalyzes the isomerization between 2-isopropylmalate and 3-isopropylmalate, via the formation of 2-isopropylmaleate.</text>
</comment>
<comment type="catalytic activity">
    <reaction evidence="1">
        <text>(2R,3S)-3-isopropylmalate = (2S)-2-isopropylmalate</text>
        <dbReference type="Rhea" id="RHEA:32287"/>
        <dbReference type="ChEBI" id="CHEBI:1178"/>
        <dbReference type="ChEBI" id="CHEBI:35121"/>
        <dbReference type="EC" id="4.2.1.33"/>
    </reaction>
</comment>
<comment type="cofactor">
    <cofactor evidence="1">
        <name>[4Fe-4S] cluster</name>
        <dbReference type="ChEBI" id="CHEBI:49883"/>
    </cofactor>
    <text evidence="1">Binds 1 [4Fe-4S] cluster per subunit.</text>
</comment>
<comment type="pathway">
    <text evidence="1">Amino-acid biosynthesis; L-leucine biosynthesis; L-leucine from 3-methyl-2-oxobutanoate: step 2/4.</text>
</comment>
<comment type="subunit">
    <text evidence="1">Heterodimer of LeuC and LeuD.</text>
</comment>
<comment type="similarity">
    <text evidence="1">Belongs to the aconitase/IPM isomerase family. LeuC type 1 subfamily.</text>
</comment>
<protein>
    <recommendedName>
        <fullName evidence="1">3-isopropylmalate dehydratase large subunit</fullName>
        <ecNumber evidence="1">4.2.1.33</ecNumber>
    </recommendedName>
    <alternativeName>
        <fullName evidence="1">Alpha-IPM isomerase</fullName>
        <shortName evidence="1">IPMI</shortName>
    </alternativeName>
    <alternativeName>
        <fullName evidence="1">Isopropylmalate isomerase</fullName>
    </alternativeName>
</protein>